<reference key="1">
    <citation type="submission" date="2008-05" db="EMBL/GenBank/DDBJ databases">
        <title>Complete sequence of chromosome of Geobacter lovleyi SZ.</title>
        <authorList>
            <consortium name="US DOE Joint Genome Institute"/>
            <person name="Lucas S."/>
            <person name="Copeland A."/>
            <person name="Lapidus A."/>
            <person name="Glavina del Rio T."/>
            <person name="Dalin E."/>
            <person name="Tice H."/>
            <person name="Bruce D."/>
            <person name="Goodwin L."/>
            <person name="Pitluck S."/>
            <person name="Chertkov O."/>
            <person name="Meincke L."/>
            <person name="Brettin T."/>
            <person name="Detter J.C."/>
            <person name="Han C."/>
            <person name="Tapia R."/>
            <person name="Kuske C.R."/>
            <person name="Schmutz J."/>
            <person name="Larimer F."/>
            <person name="Land M."/>
            <person name="Hauser L."/>
            <person name="Kyrpides N."/>
            <person name="Mikhailova N."/>
            <person name="Sung Y."/>
            <person name="Fletcher K.E."/>
            <person name="Ritalahti K.M."/>
            <person name="Loeffler F.E."/>
            <person name="Richardson P."/>
        </authorList>
    </citation>
    <scope>NUCLEOTIDE SEQUENCE [LARGE SCALE GENOMIC DNA]</scope>
    <source>
        <strain>ATCC BAA-1151 / DSM 17278 / SZ</strain>
    </source>
</reference>
<comment type="function">
    <text evidence="1">Catalyzes the condensation of ATP and 5-phosphoribose 1-diphosphate to form N'-(5'-phosphoribosyl)-ATP (PR-ATP). Has a crucial role in the pathway because the rate of histidine biosynthesis seems to be controlled primarily by regulation of HisG enzymatic activity.</text>
</comment>
<comment type="catalytic activity">
    <reaction evidence="1">
        <text>1-(5-phospho-beta-D-ribosyl)-ATP + diphosphate = 5-phospho-alpha-D-ribose 1-diphosphate + ATP</text>
        <dbReference type="Rhea" id="RHEA:18473"/>
        <dbReference type="ChEBI" id="CHEBI:30616"/>
        <dbReference type="ChEBI" id="CHEBI:33019"/>
        <dbReference type="ChEBI" id="CHEBI:58017"/>
        <dbReference type="ChEBI" id="CHEBI:73183"/>
        <dbReference type="EC" id="2.4.2.17"/>
    </reaction>
</comment>
<comment type="cofactor">
    <cofactor evidence="1">
        <name>Mg(2+)</name>
        <dbReference type="ChEBI" id="CHEBI:18420"/>
    </cofactor>
</comment>
<comment type="activity regulation">
    <text evidence="1">Feedback inhibited by histidine.</text>
</comment>
<comment type="pathway">
    <text evidence="1">Amino-acid biosynthesis; L-histidine biosynthesis; L-histidine from 5-phospho-alpha-D-ribose 1-diphosphate: step 1/9.</text>
</comment>
<comment type="subcellular location">
    <subcellularLocation>
        <location evidence="1">Cytoplasm</location>
    </subcellularLocation>
</comment>
<comment type="similarity">
    <text evidence="1">Belongs to the ATP phosphoribosyltransferase family. Long subfamily.</text>
</comment>
<keyword id="KW-0028">Amino-acid biosynthesis</keyword>
<keyword id="KW-0067">ATP-binding</keyword>
<keyword id="KW-0963">Cytoplasm</keyword>
<keyword id="KW-0328">Glycosyltransferase</keyword>
<keyword id="KW-0368">Histidine biosynthesis</keyword>
<keyword id="KW-0460">Magnesium</keyword>
<keyword id="KW-0479">Metal-binding</keyword>
<keyword id="KW-0547">Nucleotide-binding</keyword>
<keyword id="KW-1185">Reference proteome</keyword>
<keyword id="KW-0808">Transferase</keyword>
<feature type="chain" id="PRO_1000092733" description="ATP phosphoribosyltransferase">
    <location>
        <begin position="1"/>
        <end position="291"/>
    </location>
</feature>
<evidence type="ECO:0000255" key="1">
    <source>
        <dbReference type="HAMAP-Rule" id="MF_00079"/>
    </source>
</evidence>
<protein>
    <recommendedName>
        <fullName evidence="1">ATP phosphoribosyltransferase</fullName>
        <shortName evidence="1">ATP-PRT</shortName>
        <shortName evidence="1">ATP-PRTase</shortName>
        <ecNumber evidence="1">2.4.2.17</ecNumber>
    </recommendedName>
</protein>
<gene>
    <name evidence="1" type="primary">hisG</name>
    <name type="ordered locus">Glov_1119</name>
</gene>
<dbReference type="EC" id="2.4.2.17" evidence="1"/>
<dbReference type="EMBL" id="CP001089">
    <property type="protein sequence ID" value="ACD94841.1"/>
    <property type="molecule type" value="Genomic_DNA"/>
</dbReference>
<dbReference type="RefSeq" id="WP_012469190.1">
    <property type="nucleotide sequence ID" value="NC_010814.1"/>
</dbReference>
<dbReference type="SMR" id="B3E6L6"/>
<dbReference type="STRING" id="398767.Glov_1119"/>
<dbReference type="KEGG" id="glo:Glov_1119"/>
<dbReference type="eggNOG" id="COG0040">
    <property type="taxonomic scope" value="Bacteria"/>
</dbReference>
<dbReference type="HOGENOM" id="CLU_038115_1_1_7"/>
<dbReference type="OrthoDB" id="9801867at2"/>
<dbReference type="UniPathway" id="UPA00031">
    <property type="reaction ID" value="UER00006"/>
</dbReference>
<dbReference type="Proteomes" id="UP000002420">
    <property type="component" value="Chromosome"/>
</dbReference>
<dbReference type="GO" id="GO:0005737">
    <property type="term" value="C:cytoplasm"/>
    <property type="evidence" value="ECO:0007669"/>
    <property type="project" value="UniProtKB-SubCell"/>
</dbReference>
<dbReference type="GO" id="GO:0005524">
    <property type="term" value="F:ATP binding"/>
    <property type="evidence" value="ECO:0007669"/>
    <property type="project" value="UniProtKB-KW"/>
</dbReference>
<dbReference type="GO" id="GO:0003879">
    <property type="term" value="F:ATP phosphoribosyltransferase activity"/>
    <property type="evidence" value="ECO:0007669"/>
    <property type="project" value="UniProtKB-UniRule"/>
</dbReference>
<dbReference type="GO" id="GO:0000287">
    <property type="term" value="F:magnesium ion binding"/>
    <property type="evidence" value="ECO:0007669"/>
    <property type="project" value="UniProtKB-UniRule"/>
</dbReference>
<dbReference type="GO" id="GO:0000105">
    <property type="term" value="P:L-histidine biosynthetic process"/>
    <property type="evidence" value="ECO:0007669"/>
    <property type="project" value="UniProtKB-UniRule"/>
</dbReference>
<dbReference type="CDD" id="cd13593">
    <property type="entry name" value="PBP2_HisGL3"/>
    <property type="match status" value="1"/>
</dbReference>
<dbReference type="FunFam" id="3.30.70.120:FF:000002">
    <property type="entry name" value="ATP phosphoribosyltransferase"/>
    <property type="match status" value="1"/>
</dbReference>
<dbReference type="FunFam" id="3.40.190.10:FF:000258">
    <property type="entry name" value="ATP phosphoribosyltransferase"/>
    <property type="match status" value="1"/>
</dbReference>
<dbReference type="Gene3D" id="3.30.70.120">
    <property type="match status" value="1"/>
</dbReference>
<dbReference type="Gene3D" id="3.40.190.10">
    <property type="entry name" value="Periplasmic binding protein-like II"/>
    <property type="match status" value="2"/>
</dbReference>
<dbReference type="HAMAP" id="MF_00079">
    <property type="entry name" value="HisG_Long"/>
    <property type="match status" value="1"/>
</dbReference>
<dbReference type="InterPro" id="IPR020621">
    <property type="entry name" value="ATP-PRT_HisG_long"/>
</dbReference>
<dbReference type="InterPro" id="IPR013820">
    <property type="entry name" value="ATP_PRibTrfase_cat"/>
</dbReference>
<dbReference type="InterPro" id="IPR001348">
    <property type="entry name" value="ATP_PRibTrfase_HisG"/>
</dbReference>
<dbReference type="InterPro" id="IPR013115">
    <property type="entry name" value="HisG_C"/>
</dbReference>
<dbReference type="InterPro" id="IPR011322">
    <property type="entry name" value="N-reg_PII-like_a/b"/>
</dbReference>
<dbReference type="InterPro" id="IPR015867">
    <property type="entry name" value="N-reg_PII/ATP_PRibTrfase_C"/>
</dbReference>
<dbReference type="NCBIfam" id="TIGR00070">
    <property type="entry name" value="hisG"/>
    <property type="match status" value="1"/>
</dbReference>
<dbReference type="NCBIfam" id="TIGR03455">
    <property type="entry name" value="HisG_C-term"/>
    <property type="match status" value="1"/>
</dbReference>
<dbReference type="PANTHER" id="PTHR21403:SF10">
    <property type="entry name" value="ATP PHOSPHORIBOSYLTRANSFERASE"/>
    <property type="match status" value="1"/>
</dbReference>
<dbReference type="PANTHER" id="PTHR21403">
    <property type="entry name" value="ATP PHOSPHORIBOSYLTRANSFERASE ATP-PRTASE"/>
    <property type="match status" value="1"/>
</dbReference>
<dbReference type="Pfam" id="PF01634">
    <property type="entry name" value="HisG"/>
    <property type="match status" value="1"/>
</dbReference>
<dbReference type="Pfam" id="PF08029">
    <property type="entry name" value="HisG_C"/>
    <property type="match status" value="1"/>
</dbReference>
<dbReference type="SUPFAM" id="SSF54913">
    <property type="entry name" value="GlnB-like"/>
    <property type="match status" value="1"/>
</dbReference>
<dbReference type="SUPFAM" id="SSF53850">
    <property type="entry name" value="Periplasmic binding protein-like II"/>
    <property type="match status" value="1"/>
</dbReference>
<accession>B3E6L6</accession>
<proteinExistence type="inferred from homology"/>
<name>HIS1_TRIL1</name>
<sequence length="291" mass="32413">MSTVLRFGIPKGSLEEATVDLFKQAGWQIGISSRSYFPTVDDGEMKCHLIRPQEMGKYVERGTIDVGIAGRDWIRENDSDVVEVCEMVYSKVSRRPVRWVLVVAQDSPVQGPEDLQGATISTELVEFTKRYFKERNIQVNVEFSWGATEAKVVDGLCDAIVEVTETGSTIRANNLRIVCDLMESVPVMVANKAAWEDPWKRAKIEQIATLLNSALRAEGMVGLKLNAPAEKVEAITGILPSQKAPTVAHLYKSDWVSIESILPEKEVRRIVPELLRLGAEGIIEYPLSKII</sequence>
<organism>
    <name type="scientific">Trichlorobacter lovleyi (strain ATCC BAA-1151 / DSM 17278 / SZ)</name>
    <name type="common">Geobacter lovleyi</name>
    <dbReference type="NCBI Taxonomy" id="398767"/>
    <lineage>
        <taxon>Bacteria</taxon>
        <taxon>Pseudomonadati</taxon>
        <taxon>Thermodesulfobacteriota</taxon>
        <taxon>Desulfuromonadia</taxon>
        <taxon>Geobacterales</taxon>
        <taxon>Geobacteraceae</taxon>
        <taxon>Trichlorobacter</taxon>
    </lineage>
</organism>